<name>PCBD_PROMT</name>
<dbReference type="EMBL" id="CP000095">
    <property type="protein sequence ID" value="AAZ58209.1"/>
    <property type="molecule type" value="Genomic_DNA"/>
</dbReference>
<dbReference type="RefSeq" id="WP_011294807.1">
    <property type="nucleotide sequence ID" value="NC_007335.2"/>
</dbReference>
<dbReference type="SMR" id="Q46JW9"/>
<dbReference type="STRING" id="59920.PMN2A_0718"/>
<dbReference type="KEGG" id="pmn:PMN2A_0718"/>
<dbReference type="HOGENOM" id="CLU_028310_0_0_3"/>
<dbReference type="OrthoDB" id="9429529at2"/>
<dbReference type="PhylomeDB" id="Q46JW9"/>
<dbReference type="Proteomes" id="UP000002535">
    <property type="component" value="Chromosome"/>
</dbReference>
<dbReference type="GO" id="GO:0009522">
    <property type="term" value="C:photosystem I"/>
    <property type="evidence" value="ECO:0007669"/>
    <property type="project" value="UniProtKB-KW"/>
</dbReference>
<dbReference type="GO" id="GO:0009523">
    <property type="term" value="C:photosystem II"/>
    <property type="evidence" value="ECO:0007669"/>
    <property type="project" value="UniProtKB-KW"/>
</dbReference>
<dbReference type="GO" id="GO:0031676">
    <property type="term" value="C:plasma membrane-derived thylakoid membrane"/>
    <property type="evidence" value="ECO:0007669"/>
    <property type="project" value="UniProtKB-SubCell"/>
</dbReference>
<dbReference type="GO" id="GO:0016168">
    <property type="term" value="F:chlorophyll binding"/>
    <property type="evidence" value="ECO:0007669"/>
    <property type="project" value="UniProtKB-KW"/>
</dbReference>
<dbReference type="GO" id="GO:0009767">
    <property type="term" value="P:photosynthetic electron transport chain"/>
    <property type="evidence" value="ECO:0007669"/>
    <property type="project" value="InterPro"/>
</dbReference>
<dbReference type="InterPro" id="IPR000932">
    <property type="entry name" value="PS_antenna-like"/>
</dbReference>
<dbReference type="InterPro" id="IPR036001">
    <property type="entry name" value="PS_II_antenna-like_sf"/>
</dbReference>
<dbReference type="NCBIfam" id="TIGR03041">
    <property type="entry name" value="PS_antenn_a_b"/>
    <property type="match status" value="1"/>
</dbReference>
<dbReference type="Pfam" id="PF00421">
    <property type="entry name" value="PSII"/>
    <property type="match status" value="1"/>
</dbReference>
<dbReference type="SUPFAM" id="SSF161077">
    <property type="entry name" value="Photosystem II antenna protein-like"/>
    <property type="match status" value="1"/>
</dbReference>
<gene>
    <name type="primary">pcbD</name>
    <name type="ordered locus">PMN2A_0718</name>
</gene>
<keyword id="KW-0148">Chlorophyll</keyword>
<keyword id="KW-0157">Chromophore</keyword>
<keyword id="KW-0472">Membrane</keyword>
<keyword id="KW-0602">Photosynthesis</keyword>
<keyword id="KW-0603">Photosystem I</keyword>
<keyword id="KW-0604">Photosystem II</keyword>
<keyword id="KW-1185">Reference proteome</keyword>
<keyword id="KW-0793">Thylakoid</keyword>
<keyword id="KW-0812">Transmembrane</keyword>
<keyword id="KW-1133">Transmembrane helix</keyword>
<protein>
    <recommendedName>
        <fullName>Divinyl chlorophyll a/b light-harvesting protein PcbD</fullName>
    </recommendedName>
</protein>
<comment type="function">
    <text evidence="2">The antenna complex functions as a light receptor, it captures and delivers excitation energy to photosystems II and I. The Prochlorales pcb genes are not related to higher plant LHCs.</text>
</comment>
<comment type="cofactor">
    <cofactor evidence="2">
        <name>divinyl chlorophyll a</name>
        <dbReference type="ChEBI" id="CHEBI:73095"/>
    </cofactor>
</comment>
<comment type="cofactor">
    <cofactor evidence="2">
        <name>divinyl chlorophyll b</name>
        <dbReference type="ChEBI" id="CHEBI:73096"/>
    </cofactor>
</comment>
<comment type="subunit">
    <text evidence="2">The antenna complex consists of divinyl chlorophylls (a and b) and divinyl chlorophyll a/b binding proteins and binds more divinyl chlorophyll b than does the antenna complex from high-light-adapted Prochlorococcus.</text>
</comment>
<comment type="subcellular location">
    <subcellularLocation>
        <location evidence="2">Cellular thylakoid membrane</location>
        <topology evidence="1">Multi-pass membrane protein</topology>
    </subcellularLocation>
</comment>
<comment type="miscellaneous">
    <text evidence="4">This low-light-adapted strain contains 7 pcb genes.</text>
</comment>
<comment type="similarity">
    <text evidence="5">Belongs to the PsbB/PsbC family. IsiA/Pcb subfamily.</text>
</comment>
<reference key="1">
    <citation type="journal article" date="2007" name="PLoS Genet.">
        <title>Patterns and implications of gene gain and loss in the evolution of Prochlorococcus.</title>
        <authorList>
            <person name="Kettler G.C."/>
            <person name="Martiny A.C."/>
            <person name="Huang K."/>
            <person name="Zucker J."/>
            <person name="Coleman M.L."/>
            <person name="Rodrigue S."/>
            <person name="Chen F."/>
            <person name="Lapidus A."/>
            <person name="Ferriera S."/>
            <person name="Johnson J."/>
            <person name="Steglich C."/>
            <person name="Church G.M."/>
            <person name="Richardson P."/>
            <person name="Chisholm S.W."/>
        </authorList>
    </citation>
    <scope>NUCLEOTIDE SEQUENCE [LARGE SCALE GENOMIC DNA]</scope>
    <source>
        <strain>NATL2A</strain>
    </source>
</reference>
<evidence type="ECO:0000250" key="1"/>
<evidence type="ECO:0000250" key="2">
    <source>
        <dbReference type="UniProtKB" id="Q6Q972"/>
    </source>
</evidence>
<evidence type="ECO:0000255" key="3"/>
<evidence type="ECO:0000303" key="4">
    <source>
    </source>
</evidence>
<evidence type="ECO:0000305" key="5"/>
<feature type="chain" id="PRO_0000077552" description="Divinyl chlorophyll a/b light-harvesting protein PcbD">
    <location>
        <begin position="1"/>
        <end position="370"/>
    </location>
</feature>
<feature type="transmembrane region" description="Helical" evidence="3">
    <location>
        <begin position="27"/>
        <end position="47"/>
    </location>
</feature>
<feature type="transmembrane region" description="Helical" evidence="3">
    <location>
        <begin position="88"/>
        <end position="108"/>
    </location>
</feature>
<feature type="transmembrane region" description="Helical" evidence="3">
    <location>
        <begin position="140"/>
        <end position="160"/>
    </location>
</feature>
<feature type="transmembrane region" description="Helical" evidence="3">
    <location>
        <begin position="201"/>
        <end position="221"/>
    </location>
</feature>
<feature type="transmembrane region" description="Helical" evidence="3">
    <location>
        <begin position="248"/>
        <end position="268"/>
    </location>
</feature>
<feature type="transmembrane region" description="Helical" evidence="3">
    <location>
        <begin position="315"/>
        <end position="335"/>
    </location>
</feature>
<organism>
    <name type="scientific">Prochlorococcus marinus (strain NATL2A)</name>
    <dbReference type="NCBI Taxonomy" id="59920"/>
    <lineage>
        <taxon>Bacteria</taxon>
        <taxon>Bacillati</taxon>
        <taxon>Cyanobacteriota</taxon>
        <taxon>Cyanophyceae</taxon>
        <taxon>Synechococcales</taxon>
        <taxon>Prochlorococcaceae</taxon>
        <taxon>Prochlorococcus</taxon>
    </lineage>
</organism>
<sequence length="370" mass="40667">MQSYGNPDVTYEWWAGNSVVTSRSGRFIASHIGHTGLIAFAAGGSTLWELARYNPEIPMGHQSSLFLGHLAAFGVGFDEAGAWTGVGVAAVAIVHLVLSMVYGGGALLHAVYFEADVADSEVPRARKFKLEWNNPDNQTFILGHHLFFFGMACIAFVEWARIHGIYDPAIGSVRQVNYNLDLTMIWNRQFDFIGIDSLEDVMGGHAFLAFAELTGATIHMVAGSTQWENKRLGEWSKYKGAELLSAEAVLSWSLAGIGWMAIVAAFWAATNTTVYPIEWFGEPLKLQFSVAPYWIDTADSTGITAFFGHTTRAALVNVHYYFGFFFLQGHFWHALRALGFDFKKVSEAIGNTEGATVRVEGAGFNGRAPR</sequence>
<accession>Q46JW9</accession>
<proteinExistence type="inferred from homology"/>